<feature type="signal peptide" evidence="1">
    <location>
        <begin position="1"/>
        <end position="19"/>
    </location>
</feature>
<feature type="propeptide" id="PRO_0000425474" evidence="6">
    <location>
        <begin position="20"/>
        <end position="41"/>
    </location>
</feature>
<feature type="chain" id="PRO_0000425475" description="Kappa-scoloptoxin(07)-Ssm2a" evidence="2">
    <location>
        <begin position="44"/>
        <end position="74"/>
    </location>
</feature>
<feature type="sequence conflict" description="In Ref. 1; AA sequence." evidence="5" ref="1">
    <original>A</original>
    <variation>V</variation>
    <location>
        <position position="66"/>
    </location>
</feature>
<organism>
    <name type="scientific">Scolopendra mutilans</name>
    <name type="common">Chinese red-headed centipede</name>
    <name type="synonym">Scolopendra subspinipes mutilans</name>
    <dbReference type="NCBI Taxonomy" id="2836329"/>
    <lineage>
        <taxon>Eukaryota</taxon>
        <taxon>Metazoa</taxon>
        <taxon>Ecdysozoa</taxon>
        <taxon>Arthropoda</taxon>
        <taxon>Myriapoda</taxon>
        <taxon>Chilopoda</taxon>
        <taxon>Pleurostigmophora</taxon>
        <taxon>Scolopendromorpha</taxon>
        <taxon>Scolopendridae</taxon>
        <taxon>Scolopendra</taxon>
    </lineage>
</organism>
<name>TX72A_SCOMU</name>
<dbReference type="EMBL" id="JN646115">
    <property type="protein sequence ID" value="AFM55004.1"/>
    <property type="molecule type" value="mRNA"/>
</dbReference>
<dbReference type="GO" id="GO:0005576">
    <property type="term" value="C:extracellular region"/>
    <property type="evidence" value="ECO:0007669"/>
    <property type="project" value="UniProtKB-SubCell"/>
</dbReference>
<dbReference type="GO" id="GO:0015459">
    <property type="term" value="F:potassium channel regulator activity"/>
    <property type="evidence" value="ECO:0007669"/>
    <property type="project" value="UniProtKB-KW"/>
</dbReference>
<dbReference type="GO" id="GO:0090729">
    <property type="term" value="F:toxin activity"/>
    <property type="evidence" value="ECO:0007669"/>
    <property type="project" value="UniProtKB-KW"/>
</dbReference>
<proteinExistence type="evidence at protein level"/>
<comment type="function">
    <text evidence="2">Toxin that inhibits voltage-gated potassium channel currents in DRG neurons (IC(50)=about 570 nM). In vivo, induces neurotoxicity shown by twitching, paralysis, and body contraction. In vivo, insects injected with this toxin showed signs of neurotoxicity including twitching, paralysis, and body contraction.</text>
</comment>
<comment type="subcellular location">
    <subcellularLocation>
        <location evidence="2">Secreted</location>
    </subcellularLocation>
</comment>
<comment type="tissue specificity">
    <text evidence="6">Expressed by the venom gland.</text>
</comment>
<comment type="PTM">
    <text evidence="5">Contains 3 disulfide bonds.</text>
</comment>
<comment type="mass spectrometry"/>
<comment type="toxic dose">
    <text evidence="2">the LD(50) ranges from 0.017 mg/kg in adult blowflies to 13.0 mg/kg in cockroaches.</text>
</comment>
<comment type="similarity">
    <text evidence="5">Belongs to the scoloptoxin-07 family.</text>
</comment>
<sequence>MLVFYALLFVTVFSNTVMGATIDKPIPKPILREAIEEIEVNKRAQNHYCKEHNCPPGKHCPKVPIACVYGPCCF</sequence>
<keyword id="KW-0165">Cleavage on pair of basic residues</keyword>
<keyword id="KW-0903">Direct protein sequencing</keyword>
<keyword id="KW-1015">Disulfide bond</keyword>
<keyword id="KW-0872">Ion channel impairing toxin</keyword>
<keyword id="KW-0528">Neurotoxin</keyword>
<keyword id="KW-0632">Potassium channel impairing toxin</keyword>
<keyword id="KW-0964">Secreted</keyword>
<keyword id="KW-0732">Signal</keyword>
<keyword id="KW-0800">Toxin</keyword>
<keyword id="KW-1220">Voltage-gated potassium channel impairing toxin</keyword>
<protein>
    <recommendedName>
        <fullName evidence="4">Kappa-scoloptoxin(07)-Ssm2a</fullName>
        <shortName evidence="4">Kappa-SLPTX(07)-Ssm2a</shortName>
    </recommendedName>
    <alternativeName>
        <fullName evidence="3">Kappa-scoloptoxin-Ssm2a</fullName>
        <shortName evidence="3">Kappa-SLPTX-Ssm2a</shortName>
    </alternativeName>
</protein>
<evidence type="ECO:0000255" key="1"/>
<evidence type="ECO:0000269" key="2">
    <source>
    </source>
</evidence>
<evidence type="ECO:0000303" key="3">
    <source>
    </source>
</evidence>
<evidence type="ECO:0000303" key="4">
    <source>
    </source>
</evidence>
<evidence type="ECO:0000305" key="5"/>
<evidence type="ECO:0000305" key="6">
    <source>
    </source>
</evidence>
<reference key="1">
    <citation type="journal article" date="2012" name="Mol. Cell. Proteomics">
        <title>Chemical punch packed in venoms makes centipedes excellent predators.</title>
        <authorList>
            <person name="Yang S."/>
            <person name="Liu Z."/>
            <person name="Xiao Y."/>
            <person name="Li Y."/>
            <person name="Rong M."/>
            <person name="Liang S."/>
            <person name="Zhang Z."/>
            <person name="Yu H."/>
            <person name="King G.F."/>
            <person name="Lai R."/>
        </authorList>
    </citation>
    <scope>NUCLEOTIDE SEQUENCE [MRNA]</scope>
    <scope>PROTEIN SEQUENCE OF 44-74</scope>
    <scope>FUNCTION</scope>
    <scope>BIOASSAY</scope>
    <scope>TOXIC DOSE</scope>
    <scope>DISULFIDE BONDS</scope>
    <scope>MASS SPECTROMETRY</scope>
    <scope>SUBCELLULAR LOCATION</scope>
    <source>
        <tissue>Venom</tissue>
        <tissue>Venom gland</tissue>
    </source>
</reference>
<reference key="2">
    <citation type="journal article" date="2014" name="Mol. Biol. Evol.">
        <title>Clawing through evolution: toxin diversification and convergence in the ancient lineage Chilopoda (centipedes).</title>
        <authorList>
            <person name="Undheim E.A."/>
            <person name="Jones A."/>
            <person name="Clauser K.R."/>
            <person name="Holland J.W."/>
            <person name="Pineda S.S."/>
            <person name="King G.F."/>
            <person name="Fry B.G."/>
        </authorList>
    </citation>
    <scope>NOMENCLATURE</scope>
</reference>
<accession>I6RA66</accession>